<keyword id="KW-0002">3D-structure</keyword>
<keyword id="KW-0007">Acetylation</keyword>
<keyword id="KW-0025">Alternative splicing</keyword>
<keyword id="KW-0156">Chromatin regulator</keyword>
<keyword id="KW-0225">Disease variant</keyword>
<keyword id="KW-0238">DNA-binding</keyword>
<keyword id="KW-0991">Intellectual disability</keyword>
<keyword id="KW-1017">Isopeptide bond</keyword>
<keyword id="KW-0479">Metal-binding</keyword>
<keyword id="KW-0539">Nucleus</keyword>
<keyword id="KW-0597">Phosphoprotein</keyword>
<keyword id="KW-1267">Proteomics identification</keyword>
<keyword id="KW-1185">Reference proteome</keyword>
<keyword id="KW-0804">Transcription</keyword>
<keyword id="KW-0805">Transcription regulation</keyword>
<keyword id="KW-0832">Ubl conjugation</keyword>
<keyword id="KW-0862">Zinc</keyword>
<keyword id="KW-0863">Zinc-finger</keyword>
<protein>
    <recommendedName>
        <fullName evidence="13">AT-rich interactive domain-containing protein 2</fullName>
        <shortName evidence="13">ARID domain-containing protein 2</shortName>
    </recommendedName>
    <alternativeName>
        <fullName evidence="13">BRG1-associated factor 200</fullName>
        <shortName evidence="13">BAF200</shortName>
    </alternativeName>
    <alternativeName>
        <fullName evidence="13">Zinc finger protein with activation potential</fullName>
    </alternativeName>
    <alternativeName>
        <fullName evidence="9">Zipzap/p200</fullName>
    </alternativeName>
</protein>
<name>ARID2_HUMAN</name>
<evidence type="ECO:0000255" key="1">
    <source>
        <dbReference type="PROSITE-ProRule" id="PRU00355"/>
    </source>
</evidence>
<evidence type="ECO:0000255" key="2">
    <source>
        <dbReference type="PROSITE-ProRule" id="PRU00858"/>
    </source>
</evidence>
<evidence type="ECO:0000256" key="3">
    <source>
        <dbReference type="SAM" id="MobiDB-lite"/>
    </source>
</evidence>
<evidence type="ECO:0000269" key="4">
    <source>
    </source>
</evidence>
<evidence type="ECO:0000269" key="5">
    <source>
    </source>
</evidence>
<evidence type="ECO:0000269" key="6">
    <source>
    </source>
</evidence>
<evidence type="ECO:0000269" key="7">
    <source>
    </source>
</evidence>
<evidence type="ECO:0000269" key="8">
    <source>
    </source>
</evidence>
<evidence type="ECO:0000303" key="9">
    <source>
    </source>
</evidence>
<evidence type="ECO:0000303" key="10">
    <source>
    </source>
</evidence>
<evidence type="ECO:0000303" key="11">
    <source>
    </source>
</evidence>
<evidence type="ECO:0000303" key="12">
    <source>
    </source>
</evidence>
<evidence type="ECO:0000305" key="13"/>
<evidence type="ECO:0000312" key="14">
    <source>
        <dbReference type="HGNC" id="HGNC:18037"/>
    </source>
</evidence>
<evidence type="ECO:0007744" key="15">
    <source>
    </source>
</evidence>
<evidence type="ECO:0007744" key="16">
    <source>
    </source>
</evidence>
<evidence type="ECO:0007744" key="17">
    <source>
    </source>
</evidence>
<evidence type="ECO:0007744" key="18">
    <source>
    </source>
</evidence>
<evidence type="ECO:0007744" key="19">
    <source>
    </source>
</evidence>
<evidence type="ECO:0007829" key="20">
    <source>
        <dbReference type="PDB" id="7VDV"/>
    </source>
</evidence>
<sequence length="1835" mass="197391">MANSTGKAPPDERRKGLAFLDELRQFHHSRGSPFKKIPAVGGKELDLHGLYTRVTTLGGFAKVSEKNQWGEIVEEFNFPRSCSNAAFALKQYYLRYLEKYEKVHHFGEDDDEVPPGNPKPQLPIGAIPSSYNYQQHSVSDYLRQSYGLSMDFNSPNDYNKLVLSLLSGLPNEVDFAINVCTLLSNESKHVMQLEKDPKIITLLLANAGVFDDTLGSFSTVFGEEWKEKTDRDFVKFWKDIVDDNEVRDLISDRNKSHEGTSGEWIWESLFHPPRKLGINDIEGQRVLQIAVILRNLSFEEGNVKLLAANRTCLRFLLLSAHSHFISLRQLGLDTLGNIAAELLLDPVDFKTTHLMFHTVTKCLMSRDRFLKMRGMEILGNLCKAEDNGVLICEYVDQDSYREIICHLTLPDVLLVISTLEVLYMLTEMGDVACTKIAKVEKSIDMLVCLVSMDIQMFGPDALAAVKLIEHPSSSHQMLSEIRPQAIEQVQTQTHVASAPASRAVVAQHVAPPPGIVEIDSEKFACQWLNAHFEVNPDCSVSRAEMYSEYLSTCSKLARGGILTSTGFYKCLRTVFPNHTVKRVEDSSSNGQAHIHVVGVKRRAIPLPIQMYYQQQPVSTSVVRVDSVPDVSPAPSPAGIPHGSQTIGNHFQRTPVANQSSNLTATQMSFPVQGVHTVAQTVSRIPQNPSPHTHQQQNAPVTVIQSKAPIPCEVVKATVIQNSIPQTGVPVSIAVGGGPPQSSVVQNHSTGPQPVTVVNSQTLLHHPSVIPQQSPLHTVVPGQIPSGTPVTVIQQAVPQSHMFGRVQNIPACTSTVSQGQQLITTSPQPVQTSSQQTSAGSQSQDTVIIAPPQYVTTSASNIVSATSVQNFQVATGQMVTIAGVPSPQASRVGFQNIAPKPLPSQQVSSTVVQQPIQQPQQPTQQSVVIVSQPAQQGQTYAPAIHQIVLANPAALPAGQTVQLTGQPNITPSSSPSPVPATNNQVPTAMSSSSTPQSQGPPPTVSQMLSVKRQQQQQHSPAPPPQQVQVQVQQPQQVQMQVQPQQSNAGVGQPASGESSLIKQLLLPKRGPSTPGGKLILPAPQIPPPNNARAPSPQVVYQVASNQAAGFGVQGQTPAQQLLVGQQNVQLVPSAMPPSGGVQTVPISNLQILPGPLISNSPATIFQGTSGNQVTITVVPNTSFAPATVSQGNATQLIAPAGITMSGTQTGVGLPVQTLPATQASPAGQSSCTTATPPFKGDKIICQKEEEAKEATGLHVHERKIEVMENPSCRRGATNTSNGDTKENEMHVGSLLNGRKYSDSSLPPSNSGKIQSETNQCSLISNGPSLELGENGASGKQNSEQIDMQDIKSDLRKPLVNGICDFDKGDGSHLSKNIPNHKTSNHVGNGEISPMEPQGTLDITQQDTAKGDQLERISNGPVLTLGGSSVSSIQEASNAATQQFSGTDLLNGPLASSLNSDVPQQRPSVVVSPHSTTSVIQGHQIIAVPDSGSKVSHSPALSSDVRSTNGTAECKTVKRPAEDTDRETVAGIPNKVGVRIVTISDPNNAGCSATMVAVPAGADPSTVAKVAIESAVQQKQQHPPTYVQNVVPQNTPMPPSPAVQVQGQPNSSQPSPFSGSSQPGDPMRKPGQNFMCLWQSCKKWFQTPSQVFYHAATEHGGKDVYPGQCLWEGCEPFQRQRFSFITHLQDKHCSKDALLAGLKQDEPGQAGSQKSSTKQPTVGGTSSTPRAQKAIVNHPSAALMALRRGSRNLVFRDFTDEKEGPITKHIRLTAALILKNIGKYSECGRRLLKRHENNLSVLAISNMEASSTLAKCLYELNFTVQSKEQEKDSEMLQ</sequence>
<organism>
    <name type="scientific">Homo sapiens</name>
    <name type="common">Human</name>
    <dbReference type="NCBI Taxonomy" id="9606"/>
    <lineage>
        <taxon>Eukaryota</taxon>
        <taxon>Metazoa</taxon>
        <taxon>Chordata</taxon>
        <taxon>Craniata</taxon>
        <taxon>Vertebrata</taxon>
        <taxon>Euteleostomi</taxon>
        <taxon>Mammalia</taxon>
        <taxon>Eutheria</taxon>
        <taxon>Euarchontoglires</taxon>
        <taxon>Primates</taxon>
        <taxon>Haplorrhini</taxon>
        <taxon>Catarrhini</taxon>
        <taxon>Hominidae</taxon>
        <taxon>Homo</taxon>
    </lineage>
</organism>
<accession>Q68CP9</accession>
<accession>Q15KG9</accession>
<accession>Q5EB51</accession>
<accession>Q645I3</accession>
<accession>Q6ZRY5</accession>
<accession>Q7Z3I5</accession>
<accession>Q86T28</accession>
<accession>Q96SJ6</accession>
<accession>Q9HCL5</accession>
<gene>
    <name evidence="14" type="primary">ARID2</name>
    <name type="synonym">BAF200</name>
    <name type="synonym">KIAA1557</name>
</gene>
<dbReference type="EMBL" id="DQ096628">
    <property type="protein sequence ID" value="AAZ74794.1"/>
    <property type="molecule type" value="mRNA"/>
</dbReference>
<dbReference type="EMBL" id="AY727870">
    <property type="protein sequence ID" value="AAU20329.3"/>
    <property type="molecule type" value="mRNA"/>
</dbReference>
<dbReference type="EMBL" id="AL832200">
    <property type="protein sequence ID" value="CAD91164.1"/>
    <property type="molecule type" value="mRNA"/>
</dbReference>
<dbReference type="EMBL" id="BX537879">
    <property type="protein sequence ID" value="CAD97878.1"/>
    <property type="molecule type" value="mRNA"/>
</dbReference>
<dbReference type="EMBL" id="CR749833">
    <property type="protein sequence ID" value="CAH18689.1"/>
    <property type="molecule type" value="mRNA"/>
</dbReference>
<dbReference type="EMBL" id="AK027718">
    <property type="protein sequence ID" value="BAB55320.1"/>
    <property type="status" value="ALT_INIT"/>
    <property type="molecule type" value="mRNA"/>
</dbReference>
<dbReference type="EMBL" id="AK127872">
    <property type="protein sequence ID" value="BAC87171.1"/>
    <property type="status" value="ALT_SEQ"/>
    <property type="molecule type" value="mRNA"/>
</dbReference>
<dbReference type="EMBL" id="BC090062">
    <property type="protein sequence ID" value="AAH90062.1"/>
    <property type="molecule type" value="mRNA"/>
</dbReference>
<dbReference type="EMBL" id="AB046777">
    <property type="protein sequence ID" value="BAB13383.1"/>
    <property type="molecule type" value="mRNA"/>
</dbReference>
<dbReference type="CCDS" id="CCDS31783.1">
    <molecule id="Q68CP9-1"/>
</dbReference>
<dbReference type="RefSeq" id="NP_001334768.1">
    <property type="nucleotide sequence ID" value="NM_001347839.1"/>
</dbReference>
<dbReference type="RefSeq" id="NP_689854.2">
    <molecule id="Q68CP9-1"/>
    <property type="nucleotide sequence ID" value="NM_152641.3"/>
</dbReference>
<dbReference type="PDB" id="7VDV">
    <property type="method" value="EM"/>
    <property type="resolution" value="3.40 A"/>
    <property type="chains" value="Q=1-689"/>
</dbReference>
<dbReference type="PDB" id="7Y8R">
    <property type="method" value="EM"/>
    <property type="resolution" value="4.40 A"/>
    <property type="chains" value="L=1-1835"/>
</dbReference>
<dbReference type="PDBsum" id="7VDV"/>
<dbReference type="PDBsum" id="7Y8R"/>
<dbReference type="EMDB" id="EMD-31926"/>
<dbReference type="EMDB" id="EMD-33684"/>
<dbReference type="SMR" id="Q68CP9"/>
<dbReference type="BioGRID" id="128219">
    <property type="interactions" value="159"/>
</dbReference>
<dbReference type="ComplexPortal" id="CPX-1196">
    <property type="entry name" value="Polybromo-associated SWI/SNF ATP-dependent chromatin remodeling complex, ACTL6B variant"/>
</dbReference>
<dbReference type="ComplexPortal" id="CPX-1199">
    <property type="entry name" value="Polybromo-associated SWI/SNF ATP-dependent chromatin remodeling complex, ACTL6A variant"/>
</dbReference>
<dbReference type="CORUM" id="Q68CP9"/>
<dbReference type="DIP" id="DIP-33391N"/>
<dbReference type="FunCoup" id="Q68CP9">
    <property type="interactions" value="4218"/>
</dbReference>
<dbReference type="IntAct" id="Q68CP9">
    <property type="interactions" value="106"/>
</dbReference>
<dbReference type="MINT" id="Q68CP9"/>
<dbReference type="STRING" id="9606.ENSP00000335044"/>
<dbReference type="GlyCosmos" id="Q68CP9">
    <property type="glycosylation" value="2 sites, 1 glycan"/>
</dbReference>
<dbReference type="GlyGen" id="Q68CP9">
    <property type="glycosylation" value="19 sites, 1 O-linked glycan (18 sites)"/>
</dbReference>
<dbReference type="iPTMnet" id="Q68CP9"/>
<dbReference type="MetOSite" id="Q68CP9"/>
<dbReference type="PhosphoSitePlus" id="Q68CP9"/>
<dbReference type="SwissPalm" id="Q68CP9"/>
<dbReference type="BioMuta" id="ARID2"/>
<dbReference type="DMDM" id="73921721"/>
<dbReference type="jPOST" id="Q68CP9"/>
<dbReference type="MassIVE" id="Q68CP9"/>
<dbReference type="PaxDb" id="9606-ENSP00000335044"/>
<dbReference type="PeptideAtlas" id="Q68CP9"/>
<dbReference type="ProteomicsDB" id="66011">
    <molecule id="Q68CP9-1"/>
</dbReference>
<dbReference type="ProteomicsDB" id="66013">
    <molecule id="Q68CP9-3"/>
</dbReference>
<dbReference type="Pumba" id="Q68CP9"/>
<dbReference type="Antibodypedia" id="25264">
    <property type="antibodies" value="145 antibodies from 19 providers"/>
</dbReference>
<dbReference type="DNASU" id="196528"/>
<dbReference type="Ensembl" id="ENST00000334344.11">
    <molecule id="Q68CP9-1"/>
    <property type="protein sequence ID" value="ENSP00000335044.6"/>
    <property type="gene ID" value="ENSG00000189079.18"/>
</dbReference>
<dbReference type="GeneID" id="196528"/>
<dbReference type="KEGG" id="hsa:196528"/>
<dbReference type="MANE-Select" id="ENST00000334344.11">
    <property type="protein sequence ID" value="ENSP00000335044.6"/>
    <property type="RefSeq nucleotide sequence ID" value="NM_152641.4"/>
    <property type="RefSeq protein sequence ID" value="NP_689854.2"/>
</dbReference>
<dbReference type="UCSC" id="uc001ros.2">
    <molecule id="Q68CP9-1"/>
    <property type="organism name" value="human"/>
</dbReference>
<dbReference type="AGR" id="HGNC:18037"/>
<dbReference type="CTD" id="196528"/>
<dbReference type="DisGeNET" id="196528"/>
<dbReference type="GeneCards" id="ARID2"/>
<dbReference type="GeneReviews" id="ARID2"/>
<dbReference type="HGNC" id="HGNC:18037">
    <property type="gene designation" value="ARID2"/>
</dbReference>
<dbReference type="HPA" id="ENSG00000189079">
    <property type="expression patterns" value="Low tissue specificity"/>
</dbReference>
<dbReference type="MalaCards" id="ARID2"/>
<dbReference type="MIM" id="609539">
    <property type="type" value="gene"/>
</dbReference>
<dbReference type="MIM" id="617808">
    <property type="type" value="phenotype"/>
</dbReference>
<dbReference type="neXtProt" id="NX_Q68CP9"/>
<dbReference type="OpenTargets" id="ENSG00000189079"/>
<dbReference type="Orphanet" id="1465">
    <property type="disease" value="Coffin-Siris syndrome"/>
</dbReference>
<dbReference type="PharmGKB" id="PA134916396"/>
<dbReference type="VEuPathDB" id="HostDB:ENSG00000189079"/>
<dbReference type="eggNOG" id="KOG2312">
    <property type="taxonomic scope" value="Eukaryota"/>
</dbReference>
<dbReference type="eggNOG" id="KOG2744">
    <property type="taxonomic scope" value="Eukaryota"/>
</dbReference>
<dbReference type="GeneTree" id="ENSGT00390000016138"/>
<dbReference type="HOGENOM" id="CLU_003714_0_0_1"/>
<dbReference type="InParanoid" id="Q68CP9"/>
<dbReference type="OMA" id="NAHTAYH"/>
<dbReference type="OrthoDB" id="338531at2759"/>
<dbReference type="PAN-GO" id="Q68CP9">
    <property type="GO annotations" value="1 GO annotation based on evolutionary models"/>
</dbReference>
<dbReference type="PhylomeDB" id="Q68CP9"/>
<dbReference type="TreeFam" id="TF106406"/>
<dbReference type="PathwayCommons" id="Q68CP9"/>
<dbReference type="Reactome" id="R-HSA-3214858">
    <property type="pathway name" value="RMTs methylate histone arginines"/>
</dbReference>
<dbReference type="Reactome" id="R-HSA-8939243">
    <property type="pathway name" value="RUNX1 interacts with co-factors whose precise effect on RUNX1 targets is not known"/>
</dbReference>
<dbReference type="SignaLink" id="Q68CP9"/>
<dbReference type="SIGNOR" id="Q68CP9"/>
<dbReference type="BioGRID-ORCS" id="196528">
    <property type="hits" value="240 hits in 1210 CRISPR screens"/>
</dbReference>
<dbReference type="ChiTaRS" id="ARID2">
    <property type="organism name" value="human"/>
</dbReference>
<dbReference type="GeneWiki" id="ARID2"/>
<dbReference type="GenomeRNAi" id="196528"/>
<dbReference type="Pharos" id="Q68CP9">
    <property type="development level" value="Tbio"/>
</dbReference>
<dbReference type="PRO" id="PR:Q68CP9"/>
<dbReference type="Proteomes" id="UP000005640">
    <property type="component" value="Chromosome 12"/>
</dbReference>
<dbReference type="RNAct" id="Q68CP9">
    <property type="molecule type" value="protein"/>
</dbReference>
<dbReference type="Bgee" id="ENSG00000189079">
    <property type="expression patterns" value="Expressed in sperm and 189 other cell types or tissues"/>
</dbReference>
<dbReference type="ExpressionAtlas" id="Q68CP9">
    <property type="expression patterns" value="baseline and differential"/>
</dbReference>
<dbReference type="GO" id="GO:0000785">
    <property type="term" value="C:chromatin"/>
    <property type="evidence" value="ECO:0000303"/>
    <property type="project" value="ComplexPortal"/>
</dbReference>
<dbReference type="GO" id="GO:0000776">
    <property type="term" value="C:kinetochore"/>
    <property type="evidence" value="ECO:0000303"/>
    <property type="project" value="ComplexPortal"/>
</dbReference>
<dbReference type="GO" id="GO:0016363">
    <property type="term" value="C:nuclear matrix"/>
    <property type="evidence" value="ECO:0000303"/>
    <property type="project" value="ComplexPortal"/>
</dbReference>
<dbReference type="GO" id="GO:0005654">
    <property type="term" value="C:nucleoplasm"/>
    <property type="evidence" value="ECO:0000314"/>
    <property type="project" value="HPA"/>
</dbReference>
<dbReference type="GO" id="GO:0005634">
    <property type="term" value="C:nucleus"/>
    <property type="evidence" value="ECO:0000318"/>
    <property type="project" value="GO_Central"/>
</dbReference>
<dbReference type="GO" id="GO:0005886">
    <property type="term" value="C:plasma membrane"/>
    <property type="evidence" value="ECO:0000314"/>
    <property type="project" value="HPA"/>
</dbReference>
<dbReference type="GO" id="GO:0016586">
    <property type="term" value="C:RSC-type complex"/>
    <property type="evidence" value="ECO:0000303"/>
    <property type="project" value="ComplexPortal"/>
</dbReference>
<dbReference type="GO" id="GO:0016514">
    <property type="term" value="C:SWI/SNF complex"/>
    <property type="evidence" value="ECO:0000314"/>
    <property type="project" value="BHF-UCL"/>
</dbReference>
<dbReference type="GO" id="GO:0003677">
    <property type="term" value="F:DNA binding"/>
    <property type="evidence" value="ECO:0000314"/>
    <property type="project" value="GDB"/>
</dbReference>
<dbReference type="GO" id="GO:0008270">
    <property type="term" value="F:zinc ion binding"/>
    <property type="evidence" value="ECO:0007669"/>
    <property type="project" value="UniProtKB-KW"/>
</dbReference>
<dbReference type="GO" id="GO:0060038">
    <property type="term" value="P:cardiac muscle cell proliferation"/>
    <property type="evidence" value="ECO:0007669"/>
    <property type="project" value="Ensembl"/>
</dbReference>
<dbReference type="GO" id="GO:0006338">
    <property type="term" value="P:chromatin remodeling"/>
    <property type="evidence" value="ECO:0000303"/>
    <property type="project" value="ComplexPortal"/>
</dbReference>
<dbReference type="GO" id="GO:0060982">
    <property type="term" value="P:coronary artery morphogenesis"/>
    <property type="evidence" value="ECO:0007669"/>
    <property type="project" value="Ensembl"/>
</dbReference>
<dbReference type="GO" id="GO:0048568">
    <property type="term" value="P:embryonic organ development"/>
    <property type="evidence" value="ECO:0007669"/>
    <property type="project" value="Ensembl"/>
</dbReference>
<dbReference type="GO" id="GO:0003007">
    <property type="term" value="P:heart morphogenesis"/>
    <property type="evidence" value="ECO:0007669"/>
    <property type="project" value="Ensembl"/>
</dbReference>
<dbReference type="GO" id="GO:0042592">
    <property type="term" value="P:homeostatic process"/>
    <property type="evidence" value="ECO:0007669"/>
    <property type="project" value="Ensembl"/>
</dbReference>
<dbReference type="GO" id="GO:0030336">
    <property type="term" value="P:negative regulation of cell migration"/>
    <property type="evidence" value="ECO:0000314"/>
    <property type="project" value="BHF-UCL"/>
</dbReference>
<dbReference type="GO" id="GO:0008285">
    <property type="term" value="P:negative regulation of cell population proliferation"/>
    <property type="evidence" value="ECO:0000314"/>
    <property type="project" value="BHF-UCL"/>
</dbReference>
<dbReference type="GO" id="GO:0006337">
    <property type="term" value="P:nucleosome disassembly"/>
    <property type="evidence" value="ECO:0000314"/>
    <property type="project" value="BHF-UCL"/>
</dbReference>
<dbReference type="GO" id="GO:0045597">
    <property type="term" value="P:positive regulation of cell differentiation"/>
    <property type="evidence" value="ECO:0000303"/>
    <property type="project" value="ComplexPortal"/>
</dbReference>
<dbReference type="GO" id="GO:2000781">
    <property type="term" value="P:positive regulation of double-strand break repair"/>
    <property type="evidence" value="ECO:0000303"/>
    <property type="project" value="ComplexPortal"/>
</dbReference>
<dbReference type="GO" id="GO:1905168">
    <property type="term" value="P:positive regulation of double-strand break repair via homologous recombination"/>
    <property type="evidence" value="ECO:0000315"/>
    <property type="project" value="CACAO"/>
</dbReference>
<dbReference type="GO" id="GO:0045663">
    <property type="term" value="P:positive regulation of myoblast differentiation"/>
    <property type="evidence" value="ECO:0000303"/>
    <property type="project" value="ComplexPortal"/>
</dbReference>
<dbReference type="GO" id="GO:0045582">
    <property type="term" value="P:positive regulation of T cell differentiation"/>
    <property type="evidence" value="ECO:0000303"/>
    <property type="project" value="ComplexPortal"/>
</dbReference>
<dbReference type="GO" id="GO:0070316">
    <property type="term" value="P:regulation of G0 to G1 transition"/>
    <property type="evidence" value="ECO:0000303"/>
    <property type="project" value="ComplexPortal"/>
</dbReference>
<dbReference type="GO" id="GO:2000045">
    <property type="term" value="P:regulation of G1/S transition of mitotic cell cycle"/>
    <property type="evidence" value="ECO:0000303"/>
    <property type="project" value="ComplexPortal"/>
</dbReference>
<dbReference type="GO" id="GO:0030071">
    <property type="term" value="P:regulation of mitotic metaphase/anaphase transition"/>
    <property type="evidence" value="ECO:0000303"/>
    <property type="project" value="ComplexPortal"/>
</dbReference>
<dbReference type="GO" id="GO:2000819">
    <property type="term" value="P:regulation of nucleotide-excision repair"/>
    <property type="evidence" value="ECO:0000303"/>
    <property type="project" value="ComplexPortal"/>
</dbReference>
<dbReference type="GO" id="GO:0006357">
    <property type="term" value="P:regulation of transcription by RNA polymerase II"/>
    <property type="evidence" value="ECO:0000303"/>
    <property type="project" value="ComplexPortal"/>
</dbReference>
<dbReference type="CDD" id="cd16866">
    <property type="entry name" value="ARID_ARID2"/>
    <property type="match status" value="1"/>
</dbReference>
<dbReference type="FunFam" id="1.10.10.10:FF:000253">
    <property type="entry name" value="AT-rich interactive domain-containing protein 2"/>
    <property type="match status" value="1"/>
</dbReference>
<dbReference type="FunFam" id="1.10.150.60:FF:000011">
    <property type="entry name" value="AT-rich interactive domain-containing protein 2"/>
    <property type="match status" value="1"/>
</dbReference>
<dbReference type="Gene3D" id="1.10.150.60">
    <property type="entry name" value="ARID DNA-binding domain"/>
    <property type="match status" value="1"/>
</dbReference>
<dbReference type="Gene3D" id="1.10.10.10">
    <property type="entry name" value="Winged helix-like DNA-binding domain superfamily/Winged helix DNA-binding domain"/>
    <property type="match status" value="1"/>
</dbReference>
<dbReference type="InterPro" id="IPR001606">
    <property type="entry name" value="ARID_dom"/>
</dbReference>
<dbReference type="InterPro" id="IPR036431">
    <property type="entry name" value="ARID_dom_sf"/>
</dbReference>
<dbReference type="InterPro" id="IPR016024">
    <property type="entry name" value="ARM-type_fold"/>
</dbReference>
<dbReference type="InterPro" id="IPR052406">
    <property type="entry name" value="Chromatin_Remodeling_Comp"/>
</dbReference>
<dbReference type="InterPro" id="IPR003150">
    <property type="entry name" value="DNA-bd_RFX"/>
</dbReference>
<dbReference type="InterPro" id="IPR036388">
    <property type="entry name" value="WH-like_DNA-bd_sf"/>
</dbReference>
<dbReference type="InterPro" id="IPR036390">
    <property type="entry name" value="WH_DNA-bd_sf"/>
</dbReference>
<dbReference type="InterPro" id="IPR013087">
    <property type="entry name" value="Znf_C2H2_type"/>
</dbReference>
<dbReference type="PANTHER" id="PTHR22970">
    <property type="entry name" value="AT-RICH INTERACTIVE DOMAIN-CONTAINING PROTEIN 2"/>
    <property type="match status" value="1"/>
</dbReference>
<dbReference type="PANTHER" id="PTHR22970:SF14">
    <property type="entry name" value="AT-RICH INTERACTIVE DOMAIN-CONTAINING PROTEIN 2"/>
    <property type="match status" value="1"/>
</dbReference>
<dbReference type="Pfam" id="PF01388">
    <property type="entry name" value="ARID"/>
    <property type="match status" value="1"/>
</dbReference>
<dbReference type="Pfam" id="PF02257">
    <property type="entry name" value="RFX_DNA_binding"/>
    <property type="match status" value="1"/>
</dbReference>
<dbReference type="SMART" id="SM01014">
    <property type="entry name" value="ARID"/>
    <property type="match status" value="1"/>
</dbReference>
<dbReference type="SMART" id="SM00501">
    <property type="entry name" value="BRIGHT"/>
    <property type="match status" value="1"/>
</dbReference>
<dbReference type="SUPFAM" id="SSF46774">
    <property type="entry name" value="ARID-like"/>
    <property type="match status" value="1"/>
</dbReference>
<dbReference type="SUPFAM" id="SSF48371">
    <property type="entry name" value="ARM repeat"/>
    <property type="match status" value="1"/>
</dbReference>
<dbReference type="SUPFAM" id="SSF46785">
    <property type="entry name" value="Winged helix' DNA-binding domain"/>
    <property type="match status" value="1"/>
</dbReference>
<dbReference type="PROSITE" id="PS51011">
    <property type="entry name" value="ARID"/>
    <property type="match status" value="1"/>
</dbReference>
<dbReference type="PROSITE" id="PS51526">
    <property type="entry name" value="RFX_DBD"/>
    <property type="match status" value="1"/>
</dbReference>
<dbReference type="PROSITE" id="PS00028">
    <property type="entry name" value="ZINC_FINGER_C2H2_1"/>
    <property type="match status" value="1"/>
</dbReference>
<comment type="function">
    <text evidence="5 11 12">Involved in transcriptional activation and repression of select genes by chromatin remodeling (alteration of DNA-nucleosome topology). Required for the stability of the SWI/SNF chromatin remodeling complex SWI/SNF-B (PBAF). May be involved in targeting the complex to different genes. May be involved in regulating transcriptional activation of cardiac genes.</text>
</comment>
<comment type="subunit">
    <text evidence="4 5 11 12">Component of the SWI/SNF-B (PBAF) chromatin remodeling complex, at least composed of SMARCA4/BRG1, SMARCB1/BAF47/SNF5, ACTL6A/BAF53A or ACTL6B/BAF53B, SMARCE1/BAF57, SMARCD1/BAF60A, SMARCD2/BAF60B, perhaps SMARCD3/BAF60C, SMARCC1/BAF155, SMARCC2/BAF170, PBRM1/BAF180, ARID2/BAF200 and actin. Interacts with SRF. Forms complexes with SRF and SRF cofactors MYOCD, NKX2-5 and SRFBP1.</text>
</comment>
<comment type="interaction">
    <interactant intactId="EBI-637818">
        <id>Q68CP9</id>
    </interactant>
    <interactant intactId="EBI-637807">
        <id>Q86U86</id>
        <label>PBRM1</label>
    </interactant>
    <organismsDiffer>false</organismsDiffer>
    <experiments>5</experiments>
</comment>
<comment type="interaction">
    <interactant intactId="EBI-637818">
        <id>Q68CP9</id>
    </interactant>
    <interactant intactId="EBI-302489">
        <id>P51532</id>
        <label>SMARCA4</label>
    </interactant>
    <organismsDiffer>false</organismsDiffer>
    <experiments>10</experiments>
</comment>
<comment type="interaction">
    <interactant intactId="EBI-637818">
        <id>Q68CP9</id>
    </interactant>
    <interactant intactId="EBI-358419">
        <id>Q12824</id>
        <label>SMARCB1</label>
    </interactant>
    <organismsDiffer>false</organismsDiffer>
    <experiments>14</experiments>
</comment>
<comment type="interaction">
    <interactant intactId="EBI-637818">
        <id>Q68CP9</id>
    </interactant>
    <interactant intactId="EBI-455078">
        <id>Q969G3</id>
        <label>SMARCE1</label>
    </interactant>
    <organismsDiffer>false</organismsDiffer>
    <experiments>7</experiments>
</comment>
<comment type="subcellular location">
    <subcellularLocation>
        <location>Nucleus</location>
    </subcellularLocation>
</comment>
<comment type="alternative products">
    <event type="alternative splicing"/>
    <isoform>
        <id>Q68CP9-1</id>
        <name>1</name>
        <sequence type="displayed"/>
    </isoform>
    <isoform>
        <id>Q68CP9-3</id>
        <name>2</name>
        <sequence type="described" ref="VSP_015230"/>
    </isoform>
</comment>
<comment type="tissue specificity">
    <text evidence="5">Highly expressed in heart.</text>
</comment>
<comment type="developmental stage">
    <text evidence="5">Up-regulated in adult heart (at protein level).</text>
</comment>
<comment type="disease" evidence="6 7 8">
    <disease id="DI-05158">
        <name>Coffin-Siris syndrome 6</name>
        <acronym>CSS6</acronym>
        <description>A form of Coffin-Siris syndrome, a congenital multiple malformation syndrome with broad phenotypic and genetic variability. Cardinal features are intellectual disability, coarse facial features, hypertrichosis, and hypoplastic or absent fifth digit nails or phalanges. Additional features include malformations of the cardiac, gastrointestinal, genitourinary, and/or central nervous systems. Sucking/feeding difficulties, poor growth, ophthalmologic abnormalities, hearing impairment, and spinal anomalies are common findings. Both autosomal dominant and autosomal recessive inheritance patterns have been reported. CSS6 inheritance is autosomal dominant.</description>
        <dbReference type="MIM" id="617808"/>
    </disease>
    <text>The disease is caused by variants affecting the gene represented in this entry.</text>
</comment>
<comment type="sequence caution" evidence="13">
    <conflict type="erroneous initiation">
        <sequence resource="EMBL-CDS" id="BAB55320"/>
    </conflict>
    <text>Truncated N-terminus.</text>
</comment>
<comment type="sequence caution" evidence="13">
    <conflict type="miscellaneous discrepancy">
        <sequence resource="EMBL-CDS" id="BAC87171"/>
    </conflict>
    <text>Unlikely isoform. Cloning artifact.</text>
</comment>
<reference key="1">
    <citation type="journal article" date="2006" name="Biochem. Biophys. Res. Commun.">
        <title>Zipzap/p200 is a novel zinc finger protein contributing to cardiac gene regulation.</title>
        <authorList>
            <person name="Zhang X."/>
            <person name="Azhar G."/>
            <person name="Zhong Y."/>
            <person name="Wei J.Y."/>
        </authorList>
    </citation>
    <scope>NUCLEOTIDE SEQUENCE [MRNA] (ISOFORM 1)</scope>
    <scope>FUNCTION</scope>
    <scope>INTERACTION WITH SRF</scope>
    <scope>SUBUNIT</scope>
    <scope>TISSUE SPECIFICITY</scope>
    <scope>DEVELOPMENTAL STAGE</scope>
    <source>
        <tissue>Heart</tissue>
    </source>
</reference>
<reference key="2">
    <citation type="journal article" date="2005" name="Nucleic Acids Res.">
        <title>DNA-binding properties of ARID family proteins.</title>
        <authorList>
            <person name="Patsialou A."/>
            <person name="Wilsker D."/>
            <person name="Moran E."/>
        </authorList>
    </citation>
    <scope>NUCLEOTIDE SEQUENCE [MRNA] OF 1-1093</scope>
    <scope>DNA-BINDING</scope>
</reference>
<reference key="3">
    <citation type="journal article" date="2007" name="BMC Genomics">
        <title>The full-ORF clone resource of the German cDNA consortium.</title>
        <authorList>
            <person name="Bechtel S."/>
            <person name="Rosenfelder H."/>
            <person name="Duda A."/>
            <person name="Schmidt C.P."/>
            <person name="Ernst U."/>
            <person name="Wellenreuther R."/>
            <person name="Mehrle A."/>
            <person name="Schuster C."/>
            <person name="Bahr A."/>
            <person name="Bloecker H."/>
            <person name="Heubner D."/>
            <person name="Hoerlein A."/>
            <person name="Michel G."/>
            <person name="Wedler H."/>
            <person name="Koehrer K."/>
            <person name="Ottenwaelder B."/>
            <person name="Poustka A."/>
            <person name="Wiemann S."/>
            <person name="Schupp I."/>
        </authorList>
    </citation>
    <scope>NUCLEOTIDE SEQUENCE [LARGE SCALE MRNA] OF 28-1835 (ISOFORM 2)</scope>
    <scope>NUCLEOTIDE SEQUENCE [LARGE SCALE MRNA] OF 150-1835 (ISOFORM 1)</scope>
    <source>
        <tissue>Liver</tissue>
    </source>
</reference>
<reference key="4">
    <citation type="journal article" date="2004" name="Nat. Genet.">
        <title>Complete sequencing and characterization of 21,243 full-length human cDNAs.</title>
        <authorList>
            <person name="Ota T."/>
            <person name="Suzuki Y."/>
            <person name="Nishikawa T."/>
            <person name="Otsuki T."/>
            <person name="Sugiyama T."/>
            <person name="Irie R."/>
            <person name="Wakamatsu A."/>
            <person name="Hayashi K."/>
            <person name="Sato H."/>
            <person name="Nagai K."/>
            <person name="Kimura K."/>
            <person name="Makita H."/>
            <person name="Sekine M."/>
            <person name="Obayashi M."/>
            <person name="Nishi T."/>
            <person name="Shibahara T."/>
            <person name="Tanaka T."/>
            <person name="Ishii S."/>
            <person name="Yamamoto J."/>
            <person name="Saito K."/>
            <person name="Kawai Y."/>
            <person name="Isono Y."/>
            <person name="Nakamura Y."/>
            <person name="Nagahari K."/>
            <person name="Murakami K."/>
            <person name="Yasuda T."/>
            <person name="Iwayanagi T."/>
            <person name="Wagatsuma M."/>
            <person name="Shiratori A."/>
            <person name="Sudo H."/>
            <person name="Hosoiri T."/>
            <person name="Kaku Y."/>
            <person name="Kodaira H."/>
            <person name="Kondo H."/>
            <person name="Sugawara M."/>
            <person name="Takahashi M."/>
            <person name="Kanda K."/>
            <person name="Yokoi T."/>
            <person name="Furuya T."/>
            <person name="Kikkawa E."/>
            <person name="Omura Y."/>
            <person name="Abe K."/>
            <person name="Kamihara K."/>
            <person name="Katsuta N."/>
            <person name="Sato K."/>
            <person name="Tanikawa M."/>
            <person name="Yamazaki M."/>
            <person name="Ninomiya K."/>
            <person name="Ishibashi T."/>
            <person name="Yamashita H."/>
            <person name="Murakawa K."/>
            <person name="Fujimori K."/>
            <person name="Tanai H."/>
            <person name="Kimata M."/>
            <person name="Watanabe M."/>
            <person name="Hiraoka S."/>
            <person name="Chiba Y."/>
            <person name="Ishida S."/>
            <person name="Ono Y."/>
            <person name="Takiguchi S."/>
            <person name="Watanabe S."/>
            <person name="Yosida M."/>
            <person name="Hotuta T."/>
            <person name="Kusano J."/>
            <person name="Kanehori K."/>
            <person name="Takahashi-Fujii A."/>
            <person name="Hara H."/>
            <person name="Tanase T.-O."/>
            <person name="Nomura Y."/>
            <person name="Togiya S."/>
            <person name="Komai F."/>
            <person name="Hara R."/>
            <person name="Takeuchi K."/>
            <person name="Arita M."/>
            <person name="Imose N."/>
            <person name="Musashino K."/>
            <person name="Yuuki H."/>
            <person name="Oshima A."/>
            <person name="Sasaki N."/>
            <person name="Aotsuka S."/>
            <person name="Yoshikawa Y."/>
            <person name="Matsunawa H."/>
            <person name="Ichihara T."/>
            <person name="Shiohata N."/>
            <person name="Sano S."/>
            <person name="Moriya S."/>
            <person name="Momiyama H."/>
            <person name="Satoh N."/>
            <person name="Takami S."/>
            <person name="Terashima Y."/>
            <person name="Suzuki O."/>
            <person name="Nakagawa S."/>
            <person name="Senoh A."/>
            <person name="Mizoguchi H."/>
            <person name="Goto Y."/>
            <person name="Shimizu F."/>
            <person name="Wakebe H."/>
            <person name="Hishigaki H."/>
            <person name="Watanabe T."/>
            <person name="Sugiyama A."/>
            <person name="Takemoto M."/>
            <person name="Kawakami B."/>
            <person name="Yamazaki M."/>
            <person name="Watanabe K."/>
            <person name="Kumagai A."/>
            <person name="Itakura S."/>
            <person name="Fukuzumi Y."/>
            <person name="Fujimori Y."/>
            <person name="Komiyama M."/>
            <person name="Tashiro H."/>
            <person name="Tanigami A."/>
            <person name="Fujiwara T."/>
            <person name="Ono T."/>
            <person name="Yamada K."/>
            <person name="Fujii Y."/>
            <person name="Ozaki K."/>
            <person name="Hirao M."/>
            <person name="Ohmori Y."/>
            <person name="Kawabata A."/>
            <person name="Hikiji T."/>
            <person name="Kobatake N."/>
            <person name="Inagaki H."/>
            <person name="Ikema Y."/>
            <person name="Okamoto S."/>
            <person name="Okitani R."/>
            <person name="Kawakami T."/>
            <person name="Noguchi S."/>
            <person name="Itoh T."/>
            <person name="Shigeta K."/>
            <person name="Senba T."/>
            <person name="Matsumura K."/>
            <person name="Nakajima Y."/>
            <person name="Mizuno T."/>
            <person name="Morinaga M."/>
            <person name="Sasaki M."/>
            <person name="Togashi T."/>
            <person name="Oyama M."/>
            <person name="Hata H."/>
            <person name="Watanabe M."/>
            <person name="Komatsu T."/>
            <person name="Mizushima-Sugano J."/>
            <person name="Satoh T."/>
            <person name="Shirai Y."/>
            <person name="Takahashi Y."/>
            <person name="Nakagawa K."/>
            <person name="Okumura K."/>
            <person name="Nagase T."/>
            <person name="Nomura N."/>
            <person name="Kikuchi H."/>
            <person name="Masuho Y."/>
            <person name="Yamashita R."/>
            <person name="Nakai K."/>
            <person name="Yada T."/>
            <person name="Nakamura Y."/>
            <person name="Ohara O."/>
            <person name="Isogai T."/>
            <person name="Sugano S."/>
        </authorList>
    </citation>
    <scope>NUCLEOTIDE SEQUENCE [LARGE SCALE MRNA] OF 950-1835 (ISOFORM 1)</scope>
</reference>
<reference key="5">
    <citation type="journal article" date="2004" name="Genome Res.">
        <title>The status, quality, and expansion of the NIH full-length cDNA project: the Mammalian Gene Collection (MGC).</title>
        <authorList>
            <consortium name="The MGC Project Team"/>
        </authorList>
    </citation>
    <scope>NUCLEOTIDE SEQUENCE [LARGE SCALE MRNA] OF 976-1835 (ISOFORM 1)</scope>
    <source>
        <tissue>Testis</tissue>
    </source>
</reference>
<reference key="6">
    <citation type="journal article" date="2000" name="DNA Res.">
        <title>Prediction of the coding sequences of unidentified human genes. XVIII. The complete sequences of 100 new cDNA clones from brain which code for large proteins in vitro.</title>
        <authorList>
            <person name="Nagase T."/>
            <person name="Kikuno R."/>
            <person name="Nakayama M."/>
            <person name="Hirosawa M."/>
            <person name="Ohara O."/>
        </authorList>
    </citation>
    <scope>NUCLEOTIDE SEQUENCE [LARGE SCALE MRNA] OF 1030-1835 (ISOFORM 1)</scope>
    <source>
        <tissue>Brain</tissue>
    </source>
</reference>
<reference key="7">
    <citation type="journal article" date="2008" name="Proc. Natl. Acad. Sci. U.S.A.">
        <title>A quantitative atlas of mitotic phosphorylation.</title>
        <authorList>
            <person name="Dephoure N."/>
            <person name="Zhou C."/>
            <person name="Villen J."/>
            <person name="Beausoleil S.A."/>
            <person name="Bakalarski C.E."/>
            <person name="Elledge S.J."/>
            <person name="Gygi S.P."/>
        </authorList>
    </citation>
    <scope>PHOSPHORYLATION [LARGE SCALE ANALYSIS] AT SER-631; SER-635; THR-653; SER-689; THR-692 AND SER-1496</scope>
    <scope>IDENTIFICATION BY MASS SPECTROMETRY [LARGE SCALE ANALYSIS]</scope>
    <source>
        <tissue>Cervix carcinoma</tissue>
    </source>
</reference>
<reference key="8">
    <citation type="journal article" date="2010" name="Sci. Signal.">
        <title>Quantitative phosphoproteomics reveals widespread full phosphorylation site occupancy during mitosis.</title>
        <authorList>
            <person name="Olsen J.V."/>
            <person name="Vermeulen M."/>
            <person name="Santamaria A."/>
            <person name="Kumar C."/>
            <person name="Miller M.L."/>
            <person name="Jensen L.J."/>
            <person name="Gnad F."/>
            <person name="Cox J."/>
            <person name="Jensen T.S."/>
            <person name="Nigg E.A."/>
            <person name="Brunak S."/>
            <person name="Mann M."/>
        </authorList>
    </citation>
    <scope>PHOSPHORYLATION [LARGE SCALE ANALYSIS] AT SER-635; SER-689 AND SER-1496</scope>
    <scope>IDENTIFICATION BY MASS SPECTROMETRY [LARGE SCALE ANALYSIS]</scope>
    <source>
        <tissue>Cervix carcinoma</tissue>
    </source>
</reference>
<reference key="9">
    <citation type="journal article" date="2011" name="BMC Syst. Biol.">
        <title>Initial characterization of the human central proteome.</title>
        <authorList>
            <person name="Burkard T.R."/>
            <person name="Planyavsky M."/>
            <person name="Kaupe I."/>
            <person name="Breitwieser F.P."/>
            <person name="Buerckstuemmer T."/>
            <person name="Bennett K.L."/>
            <person name="Superti-Furga G."/>
            <person name="Colinge J."/>
        </authorList>
    </citation>
    <scope>IDENTIFICATION BY MASS SPECTROMETRY [LARGE SCALE ANALYSIS]</scope>
</reference>
<reference key="10">
    <citation type="journal article" date="2012" name="Proc. Natl. Acad. Sci. U.S.A.">
        <title>N-terminal acetylome analyses and functional insights of the N-terminal acetyltransferase NatB.</title>
        <authorList>
            <person name="Van Damme P."/>
            <person name="Lasa M."/>
            <person name="Polevoda B."/>
            <person name="Gazquez C."/>
            <person name="Elosegui-Artola A."/>
            <person name="Kim D.S."/>
            <person name="De Juan-Pardo E."/>
            <person name="Demeyer K."/>
            <person name="Hole K."/>
            <person name="Larrea E."/>
            <person name="Timmerman E."/>
            <person name="Prieto J."/>
            <person name="Arnesen T."/>
            <person name="Sherman F."/>
            <person name="Gevaert K."/>
            <person name="Aldabe R."/>
        </authorList>
    </citation>
    <scope>ACETYLATION [LARGE SCALE ANALYSIS] AT ALA-2</scope>
    <scope>CLEAVAGE OF INITIATOR METHIONINE [LARGE SCALE ANALYSIS]</scope>
    <scope>IDENTIFICATION BY MASS SPECTROMETRY [LARGE SCALE ANALYSIS]</scope>
</reference>
<reference key="11">
    <citation type="journal article" date="2013" name="J. Proteome Res.">
        <title>Toward a comprehensive characterization of a human cancer cell phosphoproteome.</title>
        <authorList>
            <person name="Zhou H."/>
            <person name="Di Palma S."/>
            <person name="Preisinger C."/>
            <person name="Peng M."/>
            <person name="Polat A.N."/>
            <person name="Heck A.J."/>
            <person name="Mohammed S."/>
        </authorList>
    </citation>
    <scope>PHOSPHORYLATION [LARGE SCALE ANALYSIS] AT SER-4; SER-631; SER-1300; SER-1391 AND SER-1496</scope>
    <scope>IDENTIFICATION BY MASS SPECTROMETRY [LARGE SCALE ANALYSIS]</scope>
    <source>
        <tissue>Cervix carcinoma</tissue>
        <tissue>Erythroleukemia</tissue>
    </source>
</reference>
<reference key="12">
    <citation type="journal article" date="2017" name="Nat. Struct. Mol. Biol.">
        <title>Site-specific mapping of the human SUMO proteome reveals co-modification with phosphorylation.</title>
        <authorList>
            <person name="Hendriks I.A."/>
            <person name="Lyon D."/>
            <person name="Young C."/>
            <person name="Jensen L.J."/>
            <person name="Vertegaal A.C."/>
            <person name="Nielsen M.L."/>
        </authorList>
    </citation>
    <scope>SUMOYLATION [LARGE SCALE ANALYSIS] AT LYS-7; LYS-15; LYS-119; LYS-555; LYS-1701; LYS-1716 AND LYS-1731</scope>
    <scope>IDENTIFICATION BY MASS SPECTROMETRY [LARGE SCALE ANALYSIS]</scope>
</reference>
<reference key="13">
    <citation type="journal article" date="2003" name="Curr. Opin. Genet. Dev.">
        <title>Recent advances in understanding chromatin remodeling by SWI/SNF complexes.</title>
        <authorList>
            <person name="Martens J.A."/>
            <person name="Winston F."/>
        </authorList>
    </citation>
    <scope>REVIEW ON SWI/SNF CHROMATIN REMODELING COMPLEXES</scope>
</reference>
<reference key="14">
    <citation type="journal article" date="2005" name="Genes Dev.">
        <title>PBAF chromatin-remodeling complex requires a novel specificity subunit, BAF200, to regulate expression of selective interferon-responsive genes.</title>
        <authorList>
            <person name="Yan Z."/>
            <person name="Cui K."/>
            <person name="Murray D.M."/>
            <person name="Ling C."/>
            <person name="Xue Y."/>
            <person name="Gerstein A."/>
            <person name="Parsons R."/>
            <person name="Zhao K."/>
            <person name="Wang W."/>
        </authorList>
    </citation>
    <scope>IDENTIFICATION IN THE PBAF COMPLEX</scope>
    <scope>IDENTIFICATION BY MASS SPECTROMETRY</scope>
</reference>
<reference key="15">
    <citation type="journal article" date="2012" name="J. Biol. Chem.">
        <title>SWI/SNF chromatin-remodeling factors: multiscale analyses and diverse functions.</title>
        <authorList>
            <person name="Euskirchen G."/>
            <person name="Auerbach R.K."/>
            <person name="Snyder M."/>
        </authorList>
    </citation>
    <scope>REVIEW ON SWI/SNF CHROMATIN REMODELING COMPLEXES</scope>
</reference>
<reference key="16">
    <citation type="journal article" date="2015" name="Sci. Adv.">
        <title>Mammalian SWI/SNF chromatin remodeling complexes and cancer: Mechanistic insights gained from human genomics.</title>
        <authorList>
            <person name="Kadoch C."/>
            <person name="Crabtree G.R."/>
        </authorList>
    </citation>
    <scope>REVIEW ON SWI/SNF CHROMATIN REMODELING COMPLEXES</scope>
</reference>
<reference key="17">
    <citation type="journal article" date="2015" name="Neurogenetics">
        <title>Mutations in ARID2 are associated with intellectual disabilities.</title>
        <authorList>
            <person name="Shang L."/>
            <person name="Cho M.T."/>
            <person name="Retterer K."/>
            <person name="Folk L."/>
            <person name="Humberson J."/>
            <person name="Rohena L."/>
            <person name="Sidhu A."/>
            <person name="Saliganan S."/>
            <person name="Iglesias A."/>
            <person name="Vitazka P."/>
            <person name="Juusola J."/>
            <person name="O'Donnell-Luria A.H."/>
            <person name="Shen Y."/>
            <person name="Chung W.K."/>
        </authorList>
    </citation>
    <scope>INVOLVEMENT IN CSS6</scope>
    <scope>VARIANTS CSS6 343-LEU--GLN-1835 DEL AND 1440-GLN--GLN-1835 DEL</scope>
</reference>
<reference key="18">
    <citation type="journal article" date="2017" name="Am. J. Med. Genet. A">
        <title>Confirmation of an ARID2 defect in SWI/SNF-related intellectual disability.</title>
        <authorList>
            <person name="Van Paemel R."/>
            <person name="De Bruyne P."/>
            <person name="van der Straaten S."/>
            <person name="D'hondt M."/>
            <person name="Fraenkel U."/>
            <person name="Dheedene A."/>
            <person name="Menten B."/>
            <person name="Callewaert B."/>
        </authorList>
    </citation>
    <scope>INVOLVEMENT IN CSS6</scope>
</reference>
<reference key="19">
    <citation type="journal article" date="2017" name="Hum. Genet.">
        <title>Heterozygosity for ARID2 loss-of-function mutations in individuals with a Coffin-Siris syndrome-like phenotype.</title>
        <authorList>
            <person name="Bramswig N.C."/>
            <person name="Caluseriu O."/>
            <person name="Luedecke H.J."/>
            <person name="Bolduc F.V."/>
            <person name="Noel N.C."/>
            <person name="Wieland T."/>
            <person name="Surowy H.M."/>
            <person name="Christen H.J."/>
            <person name="Engels H."/>
            <person name="Strom T.M."/>
            <person name="Wieczorek D."/>
        </authorList>
    </citation>
    <scope>INVOLVEMENT IN CSS6</scope>
</reference>
<feature type="initiator methionine" description="Removed" evidence="17">
    <location>
        <position position="1"/>
    </location>
</feature>
<feature type="chain" id="PRO_0000200577" description="AT-rich interactive domain-containing protein 2">
    <location>
        <begin position="2"/>
        <end position="1835"/>
    </location>
</feature>
<feature type="domain" description="ARID" evidence="1">
    <location>
        <begin position="13"/>
        <end position="105"/>
    </location>
</feature>
<feature type="DNA-binding region" description="RFX-type winged-helix" evidence="2">
    <location>
        <begin position="524"/>
        <end position="603"/>
    </location>
</feature>
<feature type="zinc finger region" description="C2H2-type">
    <location>
        <begin position="1632"/>
        <end position="1657"/>
    </location>
</feature>
<feature type="region of interest" description="Disordered" evidence="3">
    <location>
        <begin position="819"/>
        <end position="844"/>
    </location>
</feature>
<feature type="region of interest" description="Disordered" evidence="3">
    <location>
        <begin position="962"/>
        <end position="1057"/>
    </location>
</feature>
<feature type="region of interest" description="Disordered" evidence="3">
    <location>
        <begin position="1266"/>
        <end position="1287"/>
    </location>
</feature>
<feature type="region of interest" description="Disordered" evidence="3">
    <location>
        <begin position="1295"/>
        <end position="1314"/>
    </location>
</feature>
<feature type="region of interest" description="Disordered" evidence="3">
    <location>
        <begin position="1321"/>
        <end position="1341"/>
    </location>
</feature>
<feature type="region of interest" description="Disordered" evidence="3">
    <location>
        <begin position="1488"/>
        <end position="1522"/>
    </location>
</feature>
<feature type="region of interest" description="Disordered" evidence="3">
    <location>
        <begin position="1572"/>
        <end position="1629"/>
    </location>
</feature>
<feature type="region of interest" description="Disordered" evidence="3">
    <location>
        <begin position="1703"/>
        <end position="1728"/>
    </location>
</feature>
<feature type="short sequence motif" description="LXXLL">
    <location>
        <begin position="313"/>
        <end position="317"/>
    </location>
</feature>
<feature type="compositionally biased region" description="Low complexity" evidence="3">
    <location>
        <begin position="823"/>
        <end position="843"/>
    </location>
</feature>
<feature type="compositionally biased region" description="Low complexity" evidence="3">
    <location>
        <begin position="985"/>
        <end position="996"/>
    </location>
</feature>
<feature type="compositionally biased region" description="Low complexity" evidence="3">
    <location>
        <begin position="1025"/>
        <end position="1044"/>
    </location>
</feature>
<feature type="compositionally biased region" description="Polar residues" evidence="3">
    <location>
        <begin position="1301"/>
        <end position="1314"/>
    </location>
</feature>
<feature type="compositionally biased region" description="Polar residues" evidence="3">
    <location>
        <begin position="1491"/>
        <end position="1509"/>
    </location>
</feature>
<feature type="compositionally biased region" description="Basic and acidic residues" evidence="3">
    <location>
        <begin position="1513"/>
        <end position="1522"/>
    </location>
</feature>
<feature type="compositionally biased region" description="Polar residues" evidence="3">
    <location>
        <begin position="1573"/>
        <end position="1592"/>
    </location>
</feature>
<feature type="compositionally biased region" description="Low complexity" evidence="3">
    <location>
        <begin position="1602"/>
        <end position="1623"/>
    </location>
</feature>
<feature type="compositionally biased region" description="Polar residues" evidence="3">
    <location>
        <begin position="1708"/>
        <end position="1728"/>
    </location>
</feature>
<feature type="modified residue" description="N-acetylalanine" evidence="17">
    <location>
        <position position="2"/>
    </location>
</feature>
<feature type="modified residue" description="Phosphoserine" evidence="18">
    <location>
        <position position="4"/>
    </location>
</feature>
<feature type="modified residue" description="Phosphoserine" evidence="15 18">
    <location>
        <position position="631"/>
    </location>
</feature>
<feature type="modified residue" description="Phosphoserine" evidence="15 16">
    <location>
        <position position="635"/>
    </location>
</feature>
<feature type="modified residue" description="Phosphothreonine" evidence="15">
    <location>
        <position position="653"/>
    </location>
</feature>
<feature type="modified residue" description="Phosphoserine" evidence="15 16">
    <location>
        <position position="689"/>
    </location>
</feature>
<feature type="modified residue" description="Phosphothreonine" evidence="15">
    <location>
        <position position="692"/>
    </location>
</feature>
<feature type="modified residue" description="Phosphoserine" evidence="18">
    <location>
        <position position="1300"/>
    </location>
</feature>
<feature type="modified residue" description="Phosphoserine" evidence="18">
    <location>
        <position position="1391"/>
    </location>
</feature>
<feature type="modified residue" description="Phosphoserine" evidence="15 16 18">
    <location>
        <position position="1496"/>
    </location>
</feature>
<feature type="cross-link" description="Glycyl lysine isopeptide (Lys-Gly) (interchain with G-Cter in SUMO2)" evidence="19">
    <location>
        <position position="7"/>
    </location>
</feature>
<feature type="cross-link" description="Glycyl lysine isopeptide (Lys-Gly) (interchain with G-Cter in SUMO2)" evidence="19">
    <location>
        <position position="15"/>
    </location>
</feature>
<feature type="cross-link" description="Glycyl lysine isopeptide (Lys-Gly) (interchain with G-Cter in SUMO2)" evidence="19">
    <location>
        <position position="119"/>
    </location>
</feature>
<feature type="cross-link" description="Glycyl lysine isopeptide (Lys-Gly) (interchain with G-Cter in SUMO2)" evidence="19">
    <location>
        <position position="555"/>
    </location>
</feature>
<feature type="cross-link" description="Glycyl lysine isopeptide (Lys-Gly) (interchain with G-Cter in SUMO2)" evidence="19">
    <location>
        <position position="1701"/>
    </location>
</feature>
<feature type="cross-link" description="Glycyl lysine isopeptide (Lys-Gly) (interchain with G-Cter in SUMO2)" evidence="19">
    <location>
        <position position="1716"/>
    </location>
</feature>
<feature type="cross-link" description="Glycyl lysine isopeptide (Lys-Gly) (interchain with G-Cter in SUMO2)" evidence="19">
    <location>
        <position position="1731"/>
    </location>
</feature>
<feature type="splice variant" id="VSP_015230" description="In isoform 2." evidence="10">
    <location>
        <begin position="1784"/>
        <end position="1835"/>
    </location>
</feature>
<feature type="sequence variant" id="VAR_080566" description="In CSS6." evidence="6">
    <location>
        <begin position="343"/>
        <end position="1835"/>
    </location>
</feature>
<feature type="sequence variant" id="VAR_080567" description="In CSS6." evidence="6">
    <location>
        <begin position="1440"/>
        <end position="1835"/>
    </location>
</feature>
<feature type="sequence conflict" description="In Ref. 3; CAH18689." evidence="13" ref="3">
    <original>L</original>
    <variation>P</variation>
    <location>
        <position position="169"/>
    </location>
</feature>
<feature type="sequence conflict" description="In Ref. 3; CAD91164." evidence="13" ref="3">
    <original>F</original>
    <variation>L</variation>
    <location>
        <position position="217"/>
    </location>
</feature>
<feature type="sequence conflict" description="In Ref. 3; CAD91164." evidence="13" ref="3">
    <original>T</original>
    <variation>I</variation>
    <location>
        <position position="665"/>
    </location>
</feature>
<feature type="sequence conflict" description="In Ref. 1; AAZ74794." evidence="13" ref="1">
    <original>M</original>
    <variation>T</variation>
    <location>
        <position position="801"/>
    </location>
</feature>
<feature type="sequence conflict" description="In Ref. 3; CAH18689." evidence="13" ref="3">
    <original>S</original>
    <variation>P</variation>
    <location>
        <position position="825"/>
    </location>
</feature>
<feature type="sequence conflict" description="In Ref. 3; CAD91164." evidence="13" ref="3">
    <original>V</original>
    <variation>F</variation>
    <location>
        <position position="906"/>
    </location>
</feature>
<feature type="sequence conflict" description="In Ref. 3; CAD91164." evidence="13" ref="3">
    <original>A</original>
    <variation>V</variation>
    <location>
        <position position="956"/>
    </location>
</feature>
<feature type="sequence conflict" description="In Ref. 3; CAH18689." evidence="13" ref="3">
    <original>M</original>
    <variation>T</variation>
    <location>
        <position position="988"/>
    </location>
</feature>
<feature type="sequence conflict" description="In Ref. 3; CAD97878." evidence="13" ref="3">
    <original>S</original>
    <variation>P</variation>
    <location>
        <position position="989"/>
    </location>
</feature>
<feature type="sequence conflict" description="In Ref. 4; BAB55320." evidence="13" ref="4">
    <original>Q</original>
    <variation>R</variation>
    <location>
        <position position="1035"/>
    </location>
</feature>
<feature type="sequence conflict" description="In Ref. 3; CAH18689." evidence="13" ref="3">
    <original>Q</original>
    <variation>R</variation>
    <location>
        <position position="1062"/>
    </location>
</feature>
<feature type="sequence conflict" description="In Ref. 3; CAD97878." evidence="13" ref="3">
    <original>S</original>
    <variation>G</variation>
    <location>
        <position position="1204"/>
    </location>
</feature>
<feature type="sequence conflict" description="In Ref. 3; CAD97878." evidence="13" ref="3">
    <original>S</original>
    <variation>N</variation>
    <location>
        <position position="1292"/>
    </location>
</feature>
<feature type="sequence conflict" description="In Ref. 3; CAD97878." evidence="13" ref="3">
    <original>V</original>
    <variation>A</variation>
    <location>
        <position position="1460"/>
    </location>
</feature>
<feature type="sequence conflict" description="In Ref. 3; CAD91164." evidence="13" ref="3">
    <original>D</original>
    <variation>G</variation>
    <location>
        <position position="1543"/>
    </location>
</feature>
<feature type="sequence conflict" description="In Ref. 4; BAC87171." evidence="13" ref="4">
    <original>D</original>
    <variation>N</variation>
    <location>
        <position position="1543"/>
    </location>
</feature>
<feature type="sequence conflict" description="In Ref. 3; CAD97878." evidence="13" ref="3">
    <original>S</original>
    <variation>P</variation>
    <location>
        <position position="1647"/>
    </location>
</feature>
<feature type="sequence conflict" description="In Ref. 3; CAD91164." evidence="13" ref="3">
    <original>L</original>
    <variation>S</variation>
    <location>
        <position position="1700"/>
    </location>
</feature>
<feature type="helix" evidence="20">
    <location>
        <begin position="20"/>
        <end position="29"/>
    </location>
</feature>
<feature type="turn" evidence="20">
    <location>
        <begin position="47"/>
        <end position="52"/>
    </location>
</feature>
<feature type="helix" evidence="20">
    <location>
        <begin position="53"/>
        <end position="56"/>
    </location>
</feature>
<feature type="helix" evidence="20">
    <location>
        <begin position="60"/>
        <end position="66"/>
    </location>
</feature>
<feature type="helix" evidence="20">
    <location>
        <begin position="69"/>
        <end position="75"/>
    </location>
</feature>
<feature type="helix" evidence="20">
    <location>
        <begin position="85"/>
        <end position="103"/>
    </location>
</feature>
<feature type="turn" evidence="20">
    <location>
        <begin position="104"/>
        <end position="106"/>
    </location>
</feature>
<feature type="turn" evidence="20">
    <location>
        <begin position="109"/>
        <end position="112"/>
    </location>
</feature>
<feature type="helix" evidence="20">
    <location>
        <begin position="133"/>
        <end position="136"/>
    </location>
</feature>
<feature type="helix" evidence="20">
    <location>
        <begin position="141"/>
        <end position="146"/>
    </location>
</feature>
<feature type="helix" evidence="20">
    <location>
        <begin position="159"/>
        <end position="167"/>
    </location>
</feature>
<feature type="helix" evidence="20">
    <location>
        <begin position="170"/>
        <end position="184"/>
    </location>
</feature>
<feature type="strand" evidence="20">
    <location>
        <begin position="185"/>
        <end position="188"/>
    </location>
</feature>
<feature type="turn" evidence="20">
    <location>
        <begin position="193"/>
        <end position="195"/>
    </location>
</feature>
<feature type="helix" evidence="20">
    <location>
        <begin position="199"/>
        <end position="207"/>
    </location>
</feature>
<feature type="turn" evidence="20">
    <location>
        <begin position="218"/>
        <end position="221"/>
    </location>
</feature>
<feature type="helix" evidence="20">
    <location>
        <begin position="223"/>
        <end position="229"/>
    </location>
</feature>
<feature type="helix" evidence="20">
    <location>
        <begin position="233"/>
        <end position="240"/>
    </location>
</feature>
<feature type="helix" evidence="20">
    <location>
        <begin position="244"/>
        <end position="250"/>
    </location>
</feature>
<feature type="helix" evidence="20">
    <location>
        <begin position="281"/>
        <end position="297"/>
    </location>
</feature>
<feature type="helix" evidence="20">
    <location>
        <begin position="300"/>
        <end position="308"/>
    </location>
</feature>
<feature type="helix" evidence="20">
    <location>
        <begin position="311"/>
        <end position="320"/>
    </location>
</feature>
<feature type="helix" evidence="20">
    <location>
        <begin position="325"/>
        <end position="338"/>
    </location>
</feature>
<feature type="turn" evidence="20">
    <location>
        <begin position="339"/>
        <end position="341"/>
    </location>
</feature>
<feature type="helix" evidence="20">
    <location>
        <begin position="349"/>
        <end position="360"/>
    </location>
</feature>
<feature type="turn" evidence="20">
    <location>
        <begin position="361"/>
        <end position="363"/>
    </location>
</feature>
<feature type="strand" evidence="20">
    <location>
        <begin position="364"/>
        <end position="367"/>
    </location>
</feature>
<feature type="helix" evidence="20">
    <location>
        <begin position="368"/>
        <end position="381"/>
    </location>
</feature>
<feature type="strand" evidence="20">
    <location>
        <begin position="384"/>
        <end position="386"/>
    </location>
</feature>
<feature type="helix" evidence="20">
    <location>
        <begin position="390"/>
        <end position="392"/>
    </location>
</feature>
<feature type="turn" evidence="20">
    <location>
        <begin position="393"/>
        <end position="395"/>
    </location>
</feature>
<feature type="strand" evidence="20">
    <location>
        <begin position="397"/>
        <end position="399"/>
    </location>
</feature>
<feature type="helix" evidence="20">
    <location>
        <begin position="400"/>
        <end position="405"/>
    </location>
</feature>
<feature type="strand" evidence="20">
    <location>
        <begin position="408"/>
        <end position="410"/>
    </location>
</feature>
<feature type="helix" evidence="20">
    <location>
        <begin position="412"/>
        <end position="428"/>
    </location>
</feature>
<feature type="helix" evidence="20">
    <location>
        <begin position="430"/>
        <end position="438"/>
    </location>
</feature>
<feature type="helix" evidence="20">
    <location>
        <begin position="443"/>
        <end position="451"/>
    </location>
</feature>
<feature type="helix" evidence="20">
    <location>
        <begin position="461"/>
        <end position="464"/>
    </location>
</feature>
<feature type="strand" evidence="20">
    <location>
        <begin position="467"/>
        <end position="469"/>
    </location>
</feature>
<feature type="strand" evidence="20">
    <location>
        <begin position="516"/>
        <end position="518"/>
    </location>
</feature>
<feature type="helix" evidence="20">
    <location>
        <begin position="1763"/>
        <end position="1781"/>
    </location>
</feature>
<feature type="helix" evidence="20">
    <location>
        <begin position="1784"/>
        <end position="1790"/>
    </location>
</feature>
<feature type="helix" evidence="20">
    <location>
        <begin position="1791"/>
        <end position="1793"/>
    </location>
</feature>
<feature type="helix" evidence="20">
    <location>
        <begin position="1794"/>
        <end position="1803"/>
    </location>
</feature>
<feature type="helix" evidence="20">
    <location>
        <begin position="1808"/>
        <end position="1820"/>
    </location>
</feature>
<proteinExistence type="evidence at protein level"/>